<evidence type="ECO:0000255" key="1">
    <source>
        <dbReference type="HAMAP-Rule" id="MF_00391"/>
    </source>
</evidence>
<evidence type="ECO:0000256" key="2">
    <source>
        <dbReference type="SAM" id="MobiDB-lite"/>
    </source>
</evidence>
<evidence type="ECO:0000305" key="3"/>
<dbReference type="EMBL" id="BA000039">
    <property type="protein sequence ID" value="BAC08154.1"/>
    <property type="molecule type" value="Genomic_DNA"/>
</dbReference>
<dbReference type="RefSeq" id="NP_681392.1">
    <property type="nucleotide sequence ID" value="NC_004113.1"/>
</dbReference>
<dbReference type="RefSeq" id="WP_011056450.1">
    <property type="nucleotide sequence ID" value="NC_004113.1"/>
</dbReference>
<dbReference type="SMR" id="Q8DL94"/>
<dbReference type="STRING" id="197221.gene:10747192"/>
<dbReference type="EnsemblBacteria" id="BAC08154">
    <property type="protein sequence ID" value="BAC08154"/>
    <property type="gene ID" value="BAC08154"/>
</dbReference>
<dbReference type="KEGG" id="tel:tsl0602"/>
<dbReference type="PATRIC" id="fig|197221.4.peg.636"/>
<dbReference type="eggNOG" id="COG0230">
    <property type="taxonomic scope" value="Bacteria"/>
</dbReference>
<dbReference type="Proteomes" id="UP000000440">
    <property type="component" value="Chromosome"/>
</dbReference>
<dbReference type="GO" id="GO:1990904">
    <property type="term" value="C:ribonucleoprotein complex"/>
    <property type="evidence" value="ECO:0007669"/>
    <property type="project" value="UniProtKB-KW"/>
</dbReference>
<dbReference type="GO" id="GO:0005840">
    <property type="term" value="C:ribosome"/>
    <property type="evidence" value="ECO:0007669"/>
    <property type="project" value="UniProtKB-KW"/>
</dbReference>
<dbReference type="GO" id="GO:0003735">
    <property type="term" value="F:structural constituent of ribosome"/>
    <property type="evidence" value="ECO:0007669"/>
    <property type="project" value="InterPro"/>
</dbReference>
<dbReference type="GO" id="GO:0006412">
    <property type="term" value="P:translation"/>
    <property type="evidence" value="ECO:0007669"/>
    <property type="project" value="UniProtKB-UniRule"/>
</dbReference>
<dbReference type="Gene3D" id="1.10.287.3980">
    <property type="match status" value="1"/>
</dbReference>
<dbReference type="HAMAP" id="MF_00391">
    <property type="entry name" value="Ribosomal_bL34"/>
    <property type="match status" value="1"/>
</dbReference>
<dbReference type="InterPro" id="IPR000271">
    <property type="entry name" value="Ribosomal_bL34"/>
</dbReference>
<dbReference type="InterPro" id="IPR020939">
    <property type="entry name" value="Ribosomal_bL34_CS"/>
</dbReference>
<dbReference type="NCBIfam" id="TIGR01030">
    <property type="entry name" value="rpmH_bact"/>
    <property type="match status" value="1"/>
</dbReference>
<dbReference type="Pfam" id="PF00468">
    <property type="entry name" value="Ribosomal_L34"/>
    <property type="match status" value="1"/>
</dbReference>
<dbReference type="PROSITE" id="PS00784">
    <property type="entry name" value="RIBOSOMAL_L34"/>
    <property type="match status" value="1"/>
</dbReference>
<sequence>MTQRTLGGTVRKRKRTSGFRARMRTKSGQNVIKARRRKGRARLTV</sequence>
<proteinExistence type="inferred from homology"/>
<accession>Q8DL94</accession>
<feature type="chain" id="PRO_0000187483" description="Large ribosomal subunit protein bL34">
    <location>
        <begin position="1"/>
        <end position="45"/>
    </location>
</feature>
<feature type="region of interest" description="Disordered" evidence="2">
    <location>
        <begin position="22"/>
        <end position="45"/>
    </location>
</feature>
<feature type="compositionally biased region" description="Basic residues" evidence="2">
    <location>
        <begin position="33"/>
        <end position="45"/>
    </location>
</feature>
<comment type="similarity">
    <text evidence="1">Belongs to the bacterial ribosomal protein bL34 family.</text>
</comment>
<protein>
    <recommendedName>
        <fullName evidence="1">Large ribosomal subunit protein bL34</fullName>
    </recommendedName>
    <alternativeName>
        <fullName evidence="3">50S ribosomal protein L34</fullName>
    </alternativeName>
</protein>
<reference key="1">
    <citation type="journal article" date="2002" name="DNA Res.">
        <title>Complete genome structure of the thermophilic cyanobacterium Thermosynechococcus elongatus BP-1.</title>
        <authorList>
            <person name="Nakamura Y."/>
            <person name="Kaneko T."/>
            <person name="Sato S."/>
            <person name="Ikeuchi M."/>
            <person name="Katoh H."/>
            <person name="Sasamoto S."/>
            <person name="Watanabe A."/>
            <person name="Iriguchi M."/>
            <person name="Kawashima K."/>
            <person name="Kimura T."/>
            <person name="Kishida Y."/>
            <person name="Kiyokawa C."/>
            <person name="Kohara M."/>
            <person name="Matsumoto M."/>
            <person name="Matsuno A."/>
            <person name="Nakazaki N."/>
            <person name="Shimpo S."/>
            <person name="Sugimoto M."/>
            <person name="Takeuchi C."/>
            <person name="Yamada M."/>
            <person name="Tabata S."/>
        </authorList>
    </citation>
    <scope>NUCLEOTIDE SEQUENCE [LARGE SCALE GENOMIC DNA]</scope>
    <source>
        <strain>NIES-2133 / IAM M-273 / BP-1</strain>
    </source>
</reference>
<organism>
    <name type="scientific">Thermosynechococcus vestitus (strain NIES-2133 / IAM M-273 / BP-1)</name>
    <dbReference type="NCBI Taxonomy" id="197221"/>
    <lineage>
        <taxon>Bacteria</taxon>
        <taxon>Bacillati</taxon>
        <taxon>Cyanobacteriota</taxon>
        <taxon>Cyanophyceae</taxon>
        <taxon>Acaryochloridales</taxon>
        <taxon>Thermosynechococcaceae</taxon>
        <taxon>Thermosynechococcus</taxon>
    </lineage>
</organism>
<keyword id="KW-1185">Reference proteome</keyword>
<keyword id="KW-0687">Ribonucleoprotein</keyword>
<keyword id="KW-0689">Ribosomal protein</keyword>
<gene>
    <name evidence="1" type="primary">rpmH</name>
    <name evidence="1" type="synonym">rpl34</name>
    <name type="ordered locus">tsl0602</name>
</gene>
<name>RL34_THEVB</name>